<proteinExistence type="inferred from homology"/>
<geneLocation type="chloroplast"/>
<accession>Q06GZ3</accession>
<evidence type="ECO:0000255" key="1">
    <source>
        <dbReference type="HAMAP-Rule" id="MF_01356"/>
    </source>
</evidence>
<evidence type="ECO:0000305" key="2"/>
<protein>
    <recommendedName>
        <fullName evidence="1">NAD(P)H-quinone oxidoreductase subunit K, chloroplastic</fullName>
        <ecNumber evidence="1">7.1.1.-</ecNumber>
    </recommendedName>
    <alternativeName>
        <fullName evidence="1">NAD(P)H dehydrogenase subunit K</fullName>
    </alternativeName>
    <alternativeName>
        <fullName evidence="1">NADH-plastoquinone oxidoreductase subunit K</fullName>
    </alternativeName>
</protein>
<name>NDHK_DRIGR</name>
<feature type="chain" id="PRO_0000358542" description="NAD(P)H-quinone oxidoreductase subunit K, chloroplastic">
    <location>
        <begin position="1"/>
        <end position="227"/>
    </location>
</feature>
<feature type="binding site" evidence="1">
    <location>
        <position position="43"/>
    </location>
    <ligand>
        <name>[4Fe-4S] cluster</name>
        <dbReference type="ChEBI" id="CHEBI:49883"/>
    </ligand>
</feature>
<feature type="binding site" evidence="1">
    <location>
        <position position="44"/>
    </location>
    <ligand>
        <name>[4Fe-4S] cluster</name>
        <dbReference type="ChEBI" id="CHEBI:49883"/>
    </ligand>
</feature>
<feature type="binding site" evidence="1">
    <location>
        <position position="108"/>
    </location>
    <ligand>
        <name>[4Fe-4S] cluster</name>
        <dbReference type="ChEBI" id="CHEBI:49883"/>
    </ligand>
</feature>
<feature type="binding site" evidence="1">
    <location>
        <position position="139"/>
    </location>
    <ligand>
        <name>[4Fe-4S] cluster</name>
        <dbReference type="ChEBI" id="CHEBI:49883"/>
    </ligand>
</feature>
<dbReference type="EC" id="7.1.1.-" evidence="1"/>
<dbReference type="EMBL" id="DQ887676">
    <property type="protein sequence ID" value="ABH88301.1"/>
    <property type="status" value="ALT_SEQ"/>
    <property type="molecule type" value="Genomic_DNA"/>
</dbReference>
<dbReference type="RefSeq" id="YP_784390.2">
    <property type="nucleotide sequence ID" value="NC_008456.1"/>
</dbReference>
<dbReference type="SMR" id="Q06GZ3"/>
<dbReference type="GeneID" id="4363537"/>
<dbReference type="GO" id="GO:0009535">
    <property type="term" value="C:chloroplast thylakoid membrane"/>
    <property type="evidence" value="ECO:0007669"/>
    <property type="project" value="UniProtKB-SubCell"/>
</dbReference>
<dbReference type="GO" id="GO:0045271">
    <property type="term" value="C:respiratory chain complex I"/>
    <property type="evidence" value="ECO:0007669"/>
    <property type="project" value="TreeGrafter"/>
</dbReference>
<dbReference type="GO" id="GO:0051539">
    <property type="term" value="F:4 iron, 4 sulfur cluster binding"/>
    <property type="evidence" value="ECO:0007669"/>
    <property type="project" value="UniProtKB-KW"/>
</dbReference>
<dbReference type="GO" id="GO:0005506">
    <property type="term" value="F:iron ion binding"/>
    <property type="evidence" value="ECO:0007669"/>
    <property type="project" value="UniProtKB-UniRule"/>
</dbReference>
<dbReference type="GO" id="GO:0008137">
    <property type="term" value="F:NADH dehydrogenase (ubiquinone) activity"/>
    <property type="evidence" value="ECO:0007669"/>
    <property type="project" value="InterPro"/>
</dbReference>
<dbReference type="GO" id="GO:0048038">
    <property type="term" value="F:quinone binding"/>
    <property type="evidence" value="ECO:0007669"/>
    <property type="project" value="UniProtKB-KW"/>
</dbReference>
<dbReference type="GO" id="GO:0009060">
    <property type="term" value="P:aerobic respiration"/>
    <property type="evidence" value="ECO:0007669"/>
    <property type="project" value="TreeGrafter"/>
</dbReference>
<dbReference type="GO" id="GO:0015990">
    <property type="term" value="P:electron transport coupled proton transport"/>
    <property type="evidence" value="ECO:0007669"/>
    <property type="project" value="TreeGrafter"/>
</dbReference>
<dbReference type="GO" id="GO:0019684">
    <property type="term" value="P:photosynthesis, light reaction"/>
    <property type="evidence" value="ECO:0007669"/>
    <property type="project" value="UniProtKB-UniRule"/>
</dbReference>
<dbReference type="FunFam" id="3.40.50.12280:FF:000003">
    <property type="entry name" value="NAD(P)H-quinone oxidoreductase subunit K, chloroplastic"/>
    <property type="match status" value="1"/>
</dbReference>
<dbReference type="Gene3D" id="3.40.50.12280">
    <property type="match status" value="1"/>
</dbReference>
<dbReference type="HAMAP" id="MF_01356">
    <property type="entry name" value="NDH1_NuoB"/>
    <property type="match status" value="1"/>
</dbReference>
<dbReference type="InterPro" id="IPR006137">
    <property type="entry name" value="NADH_UbQ_OxRdtase-like_20kDa"/>
</dbReference>
<dbReference type="InterPro" id="IPR006138">
    <property type="entry name" value="NADH_UQ_OxRdtase_20Kd_su"/>
</dbReference>
<dbReference type="NCBIfam" id="TIGR01957">
    <property type="entry name" value="nuoB_fam"/>
    <property type="match status" value="1"/>
</dbReference>
<dbReference type="NCBIfam" id="NF005012">
    <property type="entry name" value="PRK06411.1"/>
    <property type="match status" value="1"/>
</dbReference>
<dbReference type="PANTHER" id="PTHR11995">
    <property type="entry name" value="NADH DEHYDROGENASE"/>
    <property type="match status" value="1"/>
</dbReference>
<dbReference type="PANTHER" id="PTHR11995:SF14">
    <property type="entry name" value="NADH DEHYDROGENASE [UBIQUINONE] IRON-SULFUR PROTEIN 7, MITOCHONDRIAL"/>
    <property type="match status" value="1"/>
</dbReference>
<dbReference type="Pfam" id="PF01058">
    <property type="entry name" value="Oxidored_q6"/>
    <property type="match status" value="1"/>
</dbReference>
<dbReference type="SUPFAM" id="SSF56770">
    <property type="entry name" value="HydA/Nqo6-like"/>
    <property type="match status" value="1"/>
</dbReference>
<dbReference type="PROSITE" id="PS01150">
    <property type="entry name" value="COMPLEX1_20K"/>
    <property type="match status" value="1"/>
</dbReference>
<sequence>MNSIEFPLLDRTTQNSVISTTSNDLSNWSRLSSLWPLLYGTSCCFIEFASLIGSRFDFDRYGLVPRSSPRQADLILTAGTVTMKMAPSLVRLYEQMPEPKYVIAMGACTITGGMFSTDSYSTVRGVDKLIPVDVYLPGCPPKPEAVIDAITKLRKKVSREIYEDRIGSQQENRYFTTNHKFHVGRSTHTGNYDQGLLYKSPSTSEIPPETETFFKYKSSVSSHELVN</sequence>
<organism>
    <name type="scientific">Drimys granadensis</name>
    <dbReference type="NCBI Taxonomy" id="224735"/>
    <lineage>
        <taxon>Eukaryota</taxon>
        <taxon>Viridiplantae</taxon>
        <taxon>Streptophyta</taxon>
        <taxon>Embryophyta</taxon>
        <taxon>Tracheophyta</taxon>
        <taxon>Spermatophyta</taxon>
        <taxon>Magnoliopsida</taxon>
        <taxon>Magnoliidae</taxon>
        <taxon>Canellales</taxon>
        <taxon>Winteraceae</taxon>
        <taxon>Drimys</taxon>
    </lineage>
</organism>
<keyword id="KW-0004">4Fe-4S</keyword>
<keyword id="KW-0150">Chloroplast</keyword>
<keyword id="KW-0408">Iron</keyword>
<keyword id="KW-0411">Iron-sulfur</keyword>
<keyword id="KW-0472">Membrane</keyword>
<keyword id="KW-0479">Metal-binding</keyword>
<keyword id="KW-0520">NAD</keyword>
<keyword id="KW-0521">NADP</keyword>
<keyword id="KW-0934">Plastid</keyword>
<keyword id="KW-0618">Plastoquinone</keyword>
<keyword id="KW-0874">Quinone</keyword>
<keyword id="KW-0793">Thylakoid</keyword>
<keyword id="KW-1278">Translocase</keyword>
<keyword id="KW-0813">Transport</keyword>
<gene>
    <name evidence="1" type="primary">ndhK</name>
</gene>
<comment type="function">
    <text evidence="1">NDH shuttles electrons from NAD(P)H:plastoquinone, via FMN and iron-sulfur (Fe-S) centers, to quinones in the photosynthetic chain and possibly in a chloroplast respiratory chain. The immediate electron acceptor for the enzyme in this species is believed to be plastoquinone. Couples the redox reaction to proton translocation, and thus conserves the redox energy in a proton gradient.</text>
</comment>
<comment type="catalytic activity">
    <reaction evidence="1">
        <text>a plastoquinone + NADH + (n+1) H(+)(in) = a plastoquinol + NAD(+) + n H(+)(out)</text>
        <dbReference type="Rhea" id="RHEA:42608"/>
        <dbReference type="Rhea" id="RHEA-COMP:9561"/>
        <dbReference type="Rhea" id="RHEA-COMP:9562"/>
        <dbReference type="ChEBI" id="CHEBI:15378"/>
        <dbReference type="ChEBI" id="CHEBI:17757"/>
        <dbReference type="ChEBI" id="CHEBI:57540"/>
        <dbReference type="ChEBI" id="CHEBI:57945"/>
        <dbReference type="ChEBI" id="CHEBI:62192"/>
    </reaction>
</comment>
<comment type="catalytic activity">
    <reaction evidence="1">
        <text>a plastoquinone + NADPH + (n+1) H(+)(in) = a plastoquinol + NADP(+) + n H(+)(out)</text>
        <dbReference type="Rhea" id="RHEA:42612"/>
        <dbReference type="Rhea" id="RHEA-COMP:9561"/>
        <dbReference type="Rhea" id="RHEA-COMP:9562"/>
        <dbReference type="ChEBI" id="CHEBI:15378"/>
        <dbReference type="ChEBI" id="CHEBI:17757"/>
        <dbReference type="ChEBI" id="CHEBI:57783"/>
        <dbReference type="ChEBI" id="CHEBI:58349"/>
        <dbReference type="ChEBI" id="CHEBI:62192"/>
    </reaction>
</comment>
<comment type="cofactor">
    <cofactor evidence="1">
        <name>[4Fe-4S] cluster</name>
        <dbReference type="ChEBI" id="CHEBI:49883"/>
    </cofactor>
    <text evidence="1">Binds 1 [4Fe-4S] cluster.</text>
</comment>
<comment type="subunit">
    <text evidence="1">NDH is composed of at least 16 different subunits, 5 of which are encoded in the nucleus.</text>
</comment>
<comment type="subcellular location">
    <subcellularLocation>
        <location evidence="1">Plastid</location>
        <location evidence="1">Chloroplast thylakoid membrane</location>
        <topology evidence="1">Peripheral membrane protein</topology>
        <orientation evidence="1">Stromal side</orientation>
    </subcellularLocation>
</comment>
<comment type="similarity">
    <text evidence="1">Belongs to the complex I 20 kDa subunit family.</text>
</comment>
<comment type="sequence caution" evidence="2">
    <conflict type="erroneous initiation">
        <sequence resource="EMBL-CDS" id="ABH88301"/>
    </conflict>
    <text>Extended N-terminus.</text>
</comment>
<reference key="1">
    <citation type="journal article" date="2006" name="BMC Evol. Biol.">
        <title>Complete plastid genome sequences of Drimys, Liriodendron, and Piper: implications for the phylogenetic relationships of magnoliids.</title>
        <authorList>
            <person name="Cai Z."/>
            <person name="Penaflor C."/>
            <person name="Kuehl J.V."/>
            <person name="Leebens-Mack J."/>
            <person name="Carlson J.E."/>
            <person name="dePamphilis C.W."/>
            <person name="Boore J.L."/>
            <person name="Jansen R.K."/>
        </authorList>
    </citation>
    <scope>NUCLEOTIDE SEQUENCE [LARGE SCALE GENOMIC DNA]</scope>
</reference>